<comment type="function">
    <text evidence="1">This protein binds specifically to 23S rRNA; its binding is stimulated by other ribosomal proteins, e.g. L4, L17, and L20. It is important during the early stages of 50S assembly. It makes multiple contacts with different domains of the 23S rRNA in the assembled 50S subunit and ribosome (By similarity).</text>
</comment>
<comment type="function">
    <text evidence="1">The globular domain of the protein is located near the polypeptide exit tunnel on the outside of the subunit, while an extended beta-hairpin is found that lines the wall of the exit tunnel in the center of the 70S ribosome.</text>
</comment>
<comment type="subunit">
    <text evidence="1">Part of the 50S ribosomal subunit.</text>
</comment>
<comment type="similarity">
    <text evidence="1">Belongs to the universal ribosomal protein uL22 family.</text>
</comment>
<proteinExistence type="inferred from homology"/>
<dbReference type="EMBL" id="CP000712">
    <property type="protein sequence ID" value="ABQ76662.1"/>
    <property type="molecule type" value="Genomic_DNA"/>
</dbReference>
<dbReference type="SMR" id="A5VXQ2"/>
<dbReference type="KEGG" id="ppf:Pput_0492"/>
<dbReference type="eggNOG" id="COG0091">
    <property type="taxonomic scope" value="Bacteria"/>
</dbReference>
<dbReference type="HOGENOM" id="CLU_083987_3_3_6"/>
<dbReference type="GO" id="GO:0022625">
    <property type="term" value="C:cytosolic large ribosomal subunit"/>
    <property type="evidence" value="ECO:0007669"/>
    <property type="project" value="TreeGrafter"/>
</dbReference>
<dbReference type="GO" id="GO:0019843">
    <property type="term" value="F:rRNA binding"/>
    <property type="evidence" value="ECO:0007669"/>
    <property type="project" value="UniProtKB-UniRule"/>
</dbReference>
<dbReference type="GO" id="GO:0003735">
    <property type="term" value="F:structural constituent of ribosome"/>
    <property type="evidence" value="ECO:0007669"/>
    <property type="project" value="InterPro"/>
</dbReference>
<dbReference type="GO" id="GO:0006412">
    <property type="term" value="P:translation"/>
    <property type="evidence" value="ECO:0007669"/>
    <property type="project" value="UniProtKB-UniRule"/>
</dbReference>
<dbReference type="CDD" id="cd00336">
    <property type="entry name" value="Ribosomal_L22"/>
    <property type="match status" value="1"/>
</dbReference>
<dbReference type="FunFam" id="3.90.470.10:FF:000001">
    <property type="entry name" value="50S ribosomal protein L22"/>
    <property type="match status" value="1"/>
</dbReference>
<dbReference type="Gene3D" id="3.90.470.10">
    <property type="entry name" value="Ribosomal protein L22/L17"/>
    <property type="match status" value="1"/>
</dbReference>
<dbReference type="HAMAP" id="MF_01331_B">
    <property type="entry name" value="Ribosomal_uL22_B"/>
    <property type="match status" value="1"/>
</dbReference>
<dbReference type="InterPro" id="IPR001063">
    <property type="entry name" value="Ribosomal_uL22"/>
</dbReference>
<dbReference type="InterPro" id="IPR005727">
    <property type="entry name" value="Ribosomal_uL22_bac/chlpt-type"/>
</dbReference>
<dbReference type="InterPro" id="IPR047867">
    <property type="entry name" value="Ribosomal_uL22_bac/org-type"/>
</dbReference>
<dbReference type="InterPro" id="IPR018260">
    <property type="entry name" value="Ribosomal_uL22_CS"/>
</dbReference>
<dbReference type="InterPro" id="IPR036394">
    <property type="entry name" value="Ribosomal_uL22_sf"/>
</dbReference>
<dbReference type="NCBIfam" id="TIGR01044">
    <property type="entry name" value="rplV_bact"/>
    <property type="match status" value="1"/>
</dbReference>
<dbReference type="PANTHER" id="PTHR13501">
    <property type="entry name" value="CHLOROPLAST 50S RIBOSOMAL PROTEIN L22-RELATED"/>
    <property type="match status" value="1"/>
</dbReference>
<dbReference type="PANTHER" id="PTHR13501:SF8">
    <property type="entry name" value="LARGE RIBOSOMAL SUBUNIT PROTEIN UL22M"/>
    <property type="match status" value="1"/>
</dbReference>
<dbReference type="Pfam" id="PF00237">
    <property type="entry name" value="Ribosomal_L22"/>
    <property type="match status" value="1"/>
</dbReference>
<dbReference type="SUPFAM" id="SSF54843">
    <property type="entry name" value="Ribosomal protein L22"/>
    <property type="match status" value="1"/>
</dbReference>
<dbReference type="PROSITE" id="PS00464">
    <property type="entry name" value="RIBOSOMAL_L22"/>
    <property type="match status" value="1"/>
</dbReference>
<gene>
    <name evidence="1" type="primary">rplV</name>
    <name type="ordered locus">Pput_0492</name>
</gene>
<organism>
    <name type="scientific">Pseudomonas putida (strain ATCC 700007 / DSM 6899 / JCM 31910 / BCRC 17059 / LMG 24140 / F1)</name>
    <dbReference type="NCBI Taxonomy" id="351746"/>
    <lineage>
        <taxon>Bacteria</taxon>
        <taxon>Pseudomonadati</taxon>
        <taxon>Pseudomonadota</taxon>
        <taxon>Gammaproteobacteria</taxon>
        <taxon>Pseudomonadales</taxon>
        <taxon>Pseudomonadaceae</taxon>
        <taxon>Pseudomonas</taxon>
    </lineage>
</organism>
<reference key="1">
    <citation type="submission" date="2007-05" db="EMBL/GenBank/DDBJ databases">
        <title>Complete sequence of Pseudomonas putida F1.</title>
        <authorList>
            <consortium name="US DOE Joint Genome Institute"/>
            <person name="Copeland A."/>
            <person name="Lucas S."/>
            <person name="Lapidus A."/>
            <person name="Barry K."/>
            <person name="Detter J.C."/>
            <person name="Glavina del Rio T."/>
            <person name="Hammon N."/>
            <person name="Israni S."/>
            <person name="Dalin E."/>
            <person name="Tice H."/>
            <person name="Pitluck S."/>
            <person name="Chain P."/>
            <person name="Malfatti S."/>
            <person name="Shin M."/>
            <person name="Vergez L."/>
            <person name="Schmutz J."/>
            <person name="Larimer F."/>
            <person name="Land M."/>
            <person name="Hauser L."/>
            <person name="Kyrpides N."/>
            <person name="Lykidis A."/>
            <person name="Parales R."/>
            <person name="Richardson P."/>
        </authorList>
    </citation>
    <scope>NUCLEOTIDE SEQUENCE [LARGE SCALE GENOMIC DNA]</scope>
    <source>
        <strain>ATCC 700007 / DSM 6899 / JCM 31910 / BCRC 17059 / LMG 24140 / F1</strain>
    </source>
</reference>
<keyword id="KW-0687">Ribonucleoprotein</keyword>
<keyword id="KW-0689">Ribosomal protein</keyword>
<keyword id="KW-0694">RNA-binding</keyword>
<keyword id="KW-0699">rRNA-binding</keyword>
<name>RL22_PSEP1</name>
<sequence>MEVAAKLSGARISAQKARLVADQIRGKKVGEALNLLAFSSKKAAEIMKKVLESAVANAEHNEGADVDDLKVSTVFVNEGRSLKRIMPRAKGRADRIVKRSCHITVKVADK</sequence>
<feature type="chain" id="PRO_1000052631" description="Large ribosomal subunit protein uL22">
    <location>
        <begin position="1"/>
        <end position="110"/>
    </location>
</feature>
<evidence type="ECO:0000255" key="1">
    <source>
        <dbReference type="HAMAP-Rule" id="MF_01331"/>
    </source>
</evidence>
<evidence type="ECO:0000305" key="2"/>
<protein>
    <recommendedName>
        <fullName evidence="1">Large ribosomal subunit protein uL22</fullName>
    </recommendedName>
    <alternativeName>
        <fullName evidence="2">50S ribosomal protein L22</fullName>
    </alternativeName>
</protein>
<accession>A5VXQ2</accession>